<reference key="1">
    <citation type="journal article" date="2005" name="Nucleic Acids Res.">
        <title>Genome dynamics and diversity of Shigella species, the etiologic agents of bacillary dysentery.</title>
        <authorList>
            <person name="Yang F."/>
            <person name="Yang J."/>
            <person name="Zhang X."/>
            <person name="Chen L."/>
            <person name="Jiang Y."/>
            <person name="Yan Y."/>
            <person name="Tang X."/>
            <person name="Wang J."/>
            <person name="Xiong Z."/>
            <person name="Dong J."/>
            <person name="Xue Y."/>
            <person name="Zhu Y."/>
            <person name="Xu X."/>
            <person name="Sun L."/>
            <person name="Chen S."/>
            <person name="Nie H."/>
            <person name="Peng J."/>
            <person name="Xu J."/>
            <person name="Wang Y."/>
            <person name="Yuan Z."/>
            <person name="Wen Y."/>
            <person name="Yao Z."/>
            <person name="Shen Y."/>
            <person name="Qiang B."/>
            <person name="Hou Y."/>
            <person name="Yu J."/>
            <person name="Jin Q."/>
        </authorList>
    </citation>
    <scope>NUCLEOTIDE SEQUENCE [LARGE SCALE GENOMIC DNA]</scope>
    <source>
        <strain>Sb227</strain>
    </source>
</reference>
<sequence>MKIYLVGGAVRDALLGLPVKDRDWVVVGSTPQEMLDAGYQQVGRDFPVFLHPQTHEEYALARTERKSGSGYTGFTCYAAPDVTLEDDLKRRDLTINALAQDDNGEIIDPYNGLGDLQNRLLRHVSPAFGEDPLRVLRVARFAARYAHLGFRIADETLTLMREMTHAGELEHLTPERVWKETESALTTRNPQVFFQVLRDCGALRVLFPEIDALFGVPAPARWHPEIDTGIHTLMTLSMAAMLSPQVDVRFATLCHDLGKGLTPPELWPRHHGHGPAGVKLVEQLCQRLRVPNEIRDLARLVAEFHDLIHTFPMLNPKTIVKLFDSIDAWRKPQRVEQLALTSEADVRGRTGFESADYPQGRWLREAWEVAQSVPTKAVVEAGFKGVEIREELTRRRIAAVASWKEQRCPKPD</sequence>
<proteinExistence type="inferred from homology"/>
<name>CCA_SHIBS</name>
<keyword id="KW-0067">ATP-binding</keyword>
<keyword id="KW-0378">Hydrolase</keyword>
<keyword id="KW-0460">Magnesium</keyword>
<keyword id="KW-0479">Metal-binding</keyword>
<keyword id="KW-0511">Multifunctional enzyme</keyword>
<keyword id="KW-0533">Nickel</keyword>
<keyword id="KW-0547">Nucleotide-binding</keyword>
<keyword id="KW-0548">Nucleotidyltransferase</keyword>
<keyword id="KW-0692">RNA repair</keyword>
<keyword id="KW-0694">RNA-binding</keyword>
<keyword id="KW-0808">Transferase</keyword>
<keyword id="KW-0819">tRNA processing</keyword>
<accession>Q31WX9</accession>
<protein>
    <recommendedName>
        <fullName evidence="1">Multifunctional CCA protein</fullName>
    </recommendedName>
    <domain>
        <recommendedName>
            <fullName evidence="1">CCA-adding enzyme</fullName>
            <ecNumber evidence="1">2.7.7.72</ecNumber>
        </recommendedName>
        <alternativeName>
            <fullName evidence="1">CCA tRNA nucleotidyltransferase</fullName>
        </alternativeName>
        <alternativeName>
            <fullName evidence="1">tRNA CCA-pyrophosphorylase</fullName>
        </alternativeName>
        <alternativeName>
            <fullName evidence="1">tRNA adenylyl-/cytidylyl-transferase</fullName>
        </alternativeName>
        <alternativeName>
            <fullName evidence="1">tRNA nucleotidyltransferase</fullName>
        </alternativeName>
        <alternativeName>
            <fullName evidence="1">tRNA-NT</fullName>
        </alternativeName>
    </domain>
    <domain>
        <recommendedName>
            <fullName evidence="1">2'-nucleotidase</fullName>
            <ecNumber evidence="1">3.1.3.-</ecNumber>
        </recommendedName>
    </domain>
    <domain>
        <recommendedName>
            <fullName evidence="1">2',3'-cyclic phosphodiesterase</fullName>
            <ecNumber evidence="1">3.1.4.-</ecNumber>
        </recommendedName>
    </domain>
    <domain>
        <recommendedName>
            <fullName evidence="1">Phosphatase</fullName>
            <ecNumber evidence="1">3.1.3.-</ecNumber>
        </recommendedName>
    </domain>
</protein>
<organism>
    <name type="scientific">Shigella boydii serotype 4 (strain Sb227)</name>
    <dbReference type="NCBI Taxonomy" id="300268"/>
    <lineage>
        <taxon>Bacteria</taxon>
        <taxon>Pseudomonadati</taxon>
        <taxon>Pseudomonadota</taxon>
        <taxon>Gammaproteobacteria</taxon>
        <taxon>Enterobacterales</taxon>
        <taxon>Enterobacteriaceae</taxon>
        <taxon>Shigella</taxon>
    </lineage>
</organism>
<gene>
    <name evidence="1" type="primary">cca</name>
    <name type="ordered locus">SBO_2912</name>
</gene>
<feature type="chain" id="PRO_1000054299" description="Multifunctional CCA protein">
    <location>
        <begin position="1"/>
        <end position="412"/>
    </location>
</feature>
<feature type="domain" description="HD" evidence="1">
    <location>
        <begin position="228"/>
        <end position="329"/>
    </location>
</feature>
<feature type="binding site" evidence="1">
    <location>
        <position position="8"/>
    </location>
    <ligand>
        <name>ATP</name>
        <dbReference type="ChEBI" id="CHEBI:30616"/>
    </ligand>
</feature>
<feature type="binding site" evidence="1">
    <location>
        <position position="8"/>
    </location>
    <ligand>
        <name>CTP</name>
        <dbReference type="ChEBI" id="CHEBI:37563"/>
    </ligand>
</feature>
<feature type="binding site" evidence="1">
    <location>
        <position position="11"/>
    </location>
    <ligand>
        <name>ATP</name>
        <dbReference type="ChEBI" id="CHEBI:30616"/>
    </ligand>
</feature>
<feature type="binding site" evidence="1">
    <location>
        <position position="11"/>
    </location>
    <ligand>
        <name>CTP</name>
        <dbReference type="ChEBI" id="CHEBI:37563"/>
    </ligand>
</feature>
<feature type="binding site" evidence="1">
    <location>
        <position position="21"/>
    </location>
    <ligand>
        <name>Mg(2+)</name>
        <dbReference type="ChEBI" id="CHEBI:18420"/>
    </ligand>
</feature>
<feature type="binding site" evidence="1">
    <location>
        <position position="23"/>
    </location>
    <ligand>
        <name>Mg(2+)</name>
        <dbReference type="ChEBI" id="CHEBI:18420"/>
    </ligand>
</feature>
<feature type="binding site" evidence="1">
    <location>
        <position position="91"/>
    </location>
    <ligand>
        <name>ATP</name>
        <dbReference type="ChEBI" id="CHEBI:30616"/>
    </ligand>
</feature>
<feature type="binding site" evidence="1">
    <location>
        <position position="91"/>
    </location>
    <ligand>
        <name>CTP</name>
        <dbReference type="ChEBI" id="CHEBI:37563"/>
    </ligand>
</feature>
<feature type="binding site" evidence="1">
    <location>
        <position position="137"/>
    </location>
    <ligand>
        <name>ATP</name>
        <dbReference type="ChEBI" id="CHEBI:30616"/>
    </ligand>
</feature>
<feature type="binding site" evidence="1">
    <location>
        <position position="137"/>
    </location>
    <ligand>
        <name>CTP</name>
        <dbReference type="ChEBI" id="CHEBI:37563"/>
    </ligand>
</feature>
<feature type="binding site" evidence="1">
    <location>
        <position position="140"/>
    </location>
    <ligand>
        <name>ATP</name>
        <dbReference type="ChEBI" id="CHEBI:30616"/>
    </ligand>
</feature>
<feature type="binding site" evidence="1">
    <location>
        <position position="140"/>
    </location>
    <ligand>
        <name>CTP</name>
        <dbReference type="ChEBI" id="CHEBI:37563"/>
    </ligand>
</feature>
<dbReference type="EC" id="2.7.7.72" evidence="1"/>
<dbReference type="EC" id="3.1.3.-" evidence="1"/>
<dbReference type="EC" id="3.1.4.-" evidence="1"/>
<dbReference type="EMBL" id="CP000036">
    <property type="protein sequence ID" value="ABB67429.1"/>
    <property type="molecule type" value="Genomic_DNA"/>
</dbReference>
<dbReference type="RefSeq" id="WP_000708501.1">
    <property type="nucleotide sequence ID" value="NC_007613.1"/>
</dbReference>
<dbReference type="SMR" id="Q31WX9"/>
<dbReference type="KEGG" id="sbo:SBO_2912"/>
<dbReference type="HOGENOM" id="CLU_015961_1_1_6"/>
<dbReference type="Proteomes" id="UP000007067">
    <property type="component" value="Chromosome"/>
</dbReference>
<dbReference type="GO" id="GO:0005524">
    <property type="term" value="F:ATP binding"/>
    <property type="evidence" value="ECO:0007669"/>
    <property type="project" value="UniProtKB-UniRule"/>
</dbReference>
<dbReference type="GO" id="GO:0004810">
    <property type="term" value="F:CCA tRNA nucleotidyltransferase activity"/>
    <property type="evidence" value="ECO:0007669"/>
    <property type="project" value="UniProtKB-UniRule"/>
</dbReference>
<dbReference type="GO" id="GO:0004112">
    <property type="term" value="F:cyclic-nucleotide phosphodiesterase activity"/>
    <property type="evidence" value="ECO:0007669"/>
    <property type="project" value="UniProtKB-UniRule"/>
</dbReference>
<dbReference type="GO" id="GO:0000287">
    <property type="term" value="F:magnesium ion binding"/>
    <property type="evidence" value="ECO:0007669"/>
    <property type="project" value="UniProtKB-UniRule"/>
</dbReference>
<dbReference type="GO" id="GO:0016791">
    <property type="term" value="F:phosphatase activity"/>
    <property type="evidence" value="ECO:0007669"/>
    <property type="project" value="UniProtKB-UniRule"/>
</dbReference>
<dbReference type="GO" id="GO:0000049">
    <property type="term" value="F:tRNA binding"/>
    <property type="evidence" value="ECO:0007669"/>
    <property type="project" value="UniProtKB-UniRule"/>
</dbReference>
<dbReference type="GO" id="GO:0042245">
    <property type="term" value="P:RNA repair"/>
    <property type="evidence" value="ECO:0007669"/>
    <property type="project" value="UniProtKB-KW"/>
</dbReference>
<dbReference type="GO" id="GO:0001680">
    <property type="term" value="P:tRNA 3'-terminal CCA addition"/>
    <property type="evidence" value="ECO:0007669"/>
    <property type="project" value="UniProtKB-UniRule"/>
</dbReference>
<dbReference type="CDD" id="cd00077">
    <property type="entry name" value="HDc"/>
    <property type="match status" value="1"/>
</dbReference>
<dbReference type="CDD" id="cd05398">
    <property type="entry name" value="NT_ClassII-CCAase"/>
    <property type="match status" value="1"/>
</dbReference>
<dbReference type="FunFam" id="1.10.3090.10:FF:000001">
    <property type="entry name" value="Multifunctional CCA protein"/>
    <property type="match status" value="1"/>
</dbReference>
<dbReference type="FunFam" id="3.30.460.10:FF:000016">
    <property type="entry name" value="Multifunctional CCA protein"/>
    <property type="match status" value="1"/>
</dbReference>
<dbReference type="Gene3D" id="3.30.460.10">
    <property type="entry name" value="Beta Polymerase, domain 2"/>
    <property type="match status" value="1"/>
</dbReference>
<dbReference type="Gene3D" id="1.10.3090.10">
    <property type="entry name" value="cca-adding enzyme, domain 2"/>
    <property type="match status" value="1"/>
</dbReference>
<dbReference type="HAMAP" id="MF_01261">
    <property type="entry name" value="CCA_bact_type1"/>
    <property type="match status" value="1"/>
</dbReference>
<dbReference type="HAMAP" id="MF_01262">
    <property type="entry name" value="CCA_bact_type2"/>
    <property type="match status" value="1"/>
</dbReference>
<dbReference type="InterPro" id="IPR012006">
    <property type="entry name" value="CCA_bact"/>
</dbReference>
<dbReference type="InterPro" id="IPR003607">
    <property type="entry name" value="HD/PDEase_dom"/>
</dbReference>
<dbReference type="InterPro" id="IPR006674">
    <property type="entry name" value="HD_domain"/>
</dbReference>
<dbReference type="InterPro" id="IPR043519">
    <property type="entry name" value="NT_sf"/>
</dbReference>
<dbReference type="InterPro" id="IPR002646">
    <property type="entry name" value="PolA_pol_head_dom"/>
</dbReference>
<dbReference type="InterPro" id="IPR032828">
    <property type="entry name" value="PolyA_RNA-bd"/>
</dbReference>
<dbReference type="InterPro" id="IPR050124">
    <property type="entry name" value="tRNA_CCA-adding_enzyme"/>
</dbReference>
<dbReference type="NCBIfam" id="NF008137">
    <property type="entry name" value="PRK10885.1"/>
    <property type="match status" value="1"/>
</dbReference>
<dbReference type="PANTHER" id="PTHR47545">
    <property type="entry name" value="MULTIFUNCTIONAL CCA PROTEIN"/>
    <property type="match status" value="1"/>
</dbReference>
<dbReference type="PANTHER" id="PTHR47545:SF1">
    <property type="entry name" value="MULTIFUNCTIONAL CCA PROTEIN"/>
    <property type="match status" value="1"/>
</dbReference>
<dbReference type="Pfam" id="PF01966">
    <property type="entry name" value="HD"/>
    <property type="match status" value="1"/>
</dbReference>
<dbReference type="Pfam" id="PF01743">
    <property type="entry name" value="PolyA_pol"/>
    <property type="match status" value="1"/>
</dbReference>
<dbReference type="Pfam" id="PF12627">
    <property type="entry name" value="PolyA_pol_RNAbd"/>
    <property type="match status" value="1"/>
</dbReference>
<dbReference type="PIRSF" id="PIRSF000813">
    <property type="entry name" value="CCA_bact"/>
    <property type="match status" value="1"/>
</dbReference>
<dbReference type="SUPFAM" id="SSF81301">
    <property type="entry name" value="Nucleotidyltransferase"/>
    <property type="match status" value="1"/>
</dbReference>
<dbReference type="SUPFAM" id="SSF81891">
    <property type="entry name" value="Poly A polymerase C-terminal region-like"/>
    <property type="match status" value="1"/>
</dbReference>
<dbReference type="PROSITE" id="PS51831">
    <property type="entry name" value="HD"/>
    <property type="match status" value="1"/>
</dbReference>
<evidence type="ECO:0000255" key="1">
    <source>
        <dbReference type="HAMAP-Rule" id="MF_01261"/>
    </source>
</evidence>
<comment type="function">
    <text evidence="1">Catalyzes the addition and repair of the essential 3'-terminal CCA sequence in tRNAs without using a nucleic acid template. Adds these three nucleotides in the order of C, C, and A to the tRNA nucleotide-73, using CTP and ATP as substrates and producing inorganic pyrophosphate. tRNA 3'-terminal CCA addition is required both for tRNA processing and repair. Also involved in tRNA surveillance by mediating tandem CCA addition to generate a CCACCA at the 3' terminus of unstable tRNAs. While stable tRNAs receive only 3'-terminal CCA, unstable tRNAs are marked with CCACCA and rapidly degraded.</text>
</comment>
<comment type="catalytic activity">
    <reaction evidence="1">
        <text>a tRNA precursor + 2 CTP + ATP = a tRNA with a 3' CCA end + 3 diphosphate</text>
        <dbReference type="Rhea" id="RHEA:14433"/>
        <dbReference type="Rhea" id="RHEA-COMP:10465"/>
        <dbReference type="Rhea" id="RHEA-COMP:10468"/>
        <dbReference type="ChEBI" id="CHEBI:30616"/>
        <dbReference type="ChEBI" id="CHEBI:33019"/>
        <dbReference type="ChEBI" id="CHEBI:37563"/>
        <dbReference type="ChEBI" id="CHEBI:74896"/>
        <dbReference type="ChEBI" id="CHEBI:83071"/>
        <dbReference type="EC" id="2.7.7.72"/>
    </reaction>
</comment>
<comment type="catalytic activity">
    <reaction evidence="1">
        <text>a tRNA with a 3' CCA end + 2 CTP + ATP = a tRNA with a 3' CCACCA end + 3 diphosphate</text>
        <dbReference type="Rhea" id="RHEA:76235"/>
        <dbReference type="Rhea" id="RHEA-COMP:10468"/>
        <dbReference type="Rhea" id="RHEA-COMP:18655"/>
        <dbReference type="ChEBI" id="CHEBI:30616"/>
        <dbReference type="ChEBI" id="CHEBI:33019"/>
        <dbReference type="ChEBI" id="CHEBI:37563"/>
        <dbReference type="ChEBI" id="CHEBI:83071"/>
        <dbReference type="ChEBI" id="CHEBI:195187"/>
    </reaction>
    <physiologicalReaction direction="left-to-right" evidence="1">
        <dbReference type="Rhea" id="RHEA:76236"/>
    </physiologicalReaction>
</comment>
<comment type="cofactor">
    <cofactor evidence="1">
        <name>Mg(2+)</name>
        <dbReference type="ChEBI" id="CHEBI:18420"/>
    </cofactor>
    <text evidence="1">Magnesium is required for nucleotidyltransferase activity.</text>
</comment>
<comment type="cofactor">
    <cofactor evidence="1">
        <name>Ni(2+)</name>
        <dbReference type="ChEBI" id="CHEBI:49786"/>
    </cofactor>
    <text evidence="1">Nickel for phosphatase activity.</text>
</comment>
<comment type="subunit">
    <text evidence="1">Monomer. Can also form homodimers and oligomers.</text>
</comment>
<comment type="domain">
    <text evidence="1">Comprises two domains: an N-terminal domain containing the nucleotidyltransferase activity and a C-terminal HD domain associated with both phosphodiesterase and phosphatase activities.</text>
</comment>
<comment type="miscellaneous">
    <text evidence="1">A single active site specifically recognizes both ATP and CTP and is responsible for their addition.</text>
</comment>
<comment type="similarity">
    <text evidence="1">Belongs to the tRNA nucleotidyltransferase/poly(A) polymerase family. Bacterial CCA-adding enzyme type 1 subfamily.</text>
</comment>